<organism>
    <name type="scientific">Histophilus somni (strain 2336)</name>
    <name type="common">Haemophilus somnus</name>
    <dbReference type="NCBI Taxonomy" id="228400"/>
    <lineage>
        <taxon>Bacteria</taxon>
        <taxon>Pseudomonadati</taxon>
        <taxon>Pseudomonadota</taxon>
        <taxon>Gammaproteobacteria</taxon>
        <taxon>Pasteurellales</taxon>
        <taxon>Pasteurellaceae</taxon>
        <taxon>Histophilus</taxon>
    </lineage>
</organism>
<accession>B0UWV3</accession>
<sequence length="438" mass="48531">MKIQHLMQDPFIQKLMRFEEVMWFNPKSAGVKTGLSYVGLDVSDTQQAAERLQRFAPYFCRAFPETQKTKGILESELVSIDKMKSALIDHYHMPIQGRLLLKKDSHLPISGSIKARGGIYEVLAYAEKLALEHHLITESDDYSQLCDEKIKDFFSRYSIAVGSTGNLGLSIGIMGAVLGFKVSVHMSADAREWKKQKLRSYGVNVVEYTQDYGVAVAQGRKAALSDPNCFFIDDENSTTLFLGYSVAGQRLKQQFLEQGIKVDENHPLFVYLPCGVGGGPGGVAFGLKLAFGDYVHCIFAEPTHSPCMLLGVYTGLHDKIAVQDLGIDNITAADGLAVGRASGFVGRAMEHLLDGFYTIEDQKLYDLLGLLHKTENIQLEPSALAGMIGPLHINHSDYLRRYHITQEQLANATHIVWATGGGMVPDVEMQKYLSLGRF</sequence>
<gene>
    <name evidence="1" type="primary">dsdA</name>
    <name type="ordered locus">HSM_1892</name>
</gene>
<comment type="catalytic activity">
    <reaction evidence="1">
        <text>D-serine = pyruvate + NH4(+)</text>
        <dbReference type="Rhea" id="RHEA:13977"/>
        <dbReference type="ChEBI" id="CHEBI:15361"/>
        <dbReference type="ChEBI" id="CHEBI:28938"/>
        <dbReference type="ChEBI" id="CHEBI:35247"/>
        <dbReference type="EC" id="4.3.1.18"/>
    </reaction>
</comment>
<comment type="cofactor">
    <cofactor evidence="1">
        <name>pyridoxal 5'-phosphate</name>
        <dbReference type="ChEBI" id="CHEBI:597326"/>
    </cofactor>
</comment>
<comment type="similarity">
    <text evidence="1">Belongs to the serine/threonine dehydratase family. DsdA subfamily.</text>
</comment>
<evidence type="ECO:0000255" key="1">
    <source>
        <dbReference type="HAMAP-Rule" id="MF_01030"/>
    </source>
</evidence>
<name>SDHD_HISS2</name>
<keyword id="KW-0456">Lyase</keyword>
<keyword id="KW-0663">Pyridoxal phosphate</keyword>
<reference key="1">
    <citation type="submission" date="2008-02" db="EMBL/GenBank/DDBJ databases">
        <title>Complete sequence of Haemophilus somnus 2336.</title>
        <authorList>
            <consortium name="US DOE Joint Genome Institute"/>
            <person name="Siddaramappa S."/>
            <person name="Duncan A.J."/>
            <person name="Challacombe J.F."/>
            <person name="Rainey D."/>
            <person name="Gillaspy A.F."/>
            <person name="Carson M."/>
            <person name="Gipson J."/>
            <person name="Gipson M."/>
            <person name="Bruce D."/>
            <person name="Detter J.C."/>
            <person name="Han C.S."/>
            <person name="Land M."/>
            <person name="Tapia R."/>
            <person name="Thompson L.S."/>
            <person name="Orvis J."/>
            <person name="Zaitshik J."/>
            <person name="Barnes G."/>
            <person name="Brettin T.S."/>
            <person name="Dyer D.W."/>
            <person name="Inzana T.J."/>
        </authorList>
    </citation>
    <scope>NUCLEOTIDE SEQUENCE [LARGE SCALE GENOMIC DNA]</scope>
    <source>
        <strain>2336</strain>
    </source>
</reference>
<protein>
    <recommendedName>
        <fullName evidence="1">Probable D-serine dehydratase</fullName>
        <ecNumber evidence="1">4.3.1.18</ecNumber>
    </recommendedName>
    <alternativeName>
        <fullName evidence="1">D-serine deaminase</fullName>
        <shortName evidence="1">DSD</shortName>
    </alternativeName>
</protein>
<dbReference type="EC" id="4.3.1.18" evidence="1"/>
<dbReference type="EMBL" id="CP000947">
    <property type="protein sequence ID" value="ACA31680.1"/>
    <property type="molecule type" value="Genomic_DNA"/>
</dbReference>
<dbReference type="RefSeq" id="WP_012340977.1">
    <property type="nucleotide sequence ID" value="NC_010519.1"/>
</dbReference>
<dbReference type="SMR" id="B0UWV3"/>
<dbReference type="STRING" id="228400.HSM_1892"/>
<dbReference type="GeneID" id="31488201"/>
<dbReference type="KEGG" id="hsm:HSM_1892"/>
<dbReference type="HOGENOM" id="CLU_035707_0_0_6"/>
<dbReference type="GO" id="GO:0008721">
    <property type="term" value="F:D-serine ammonia-lyase activity"/>
    <property type="evidence" value="ECO:0007669"/>
    <property type="project" value="UniProtKB-EC"/>
</dbReference>
<dbReference type="GO" id="GO:0016836">
    <property type="term" value="F:hydro-lyase activity"/>
    <property type="evidence" value="ECO:0007669"/>
    <property type="project" value="UniProtKB-UniRule"/>
</dbReference>
<dbReference type="GO" id="GO:0030170">
    <property type="term" value="F:pyridoxal phosphate binding"/>
    <property type="evidence" value="ECO:0007669"/>
    <property type="project" value="InterPro"/>
</dbReference>
<dbReference type="GO" id="GO:0036088">
    <property type="term" value="P:D-serine catabolic process"/>
    <property type="evidence" value="ECO:0007669"/>
    <property type="project" value="TreeGrafter"/>
</dbReference>
<dbReference type="GO" id="GO:0009097">
    <property type="term" value="P:isoleucine biosynthetic process"/>
    <property type="evidence" value="ECO:0007669"/>
    <property type="project" value="TreeGrafter"/>
</dbReference>
<dbReference type="FunFam" id="3.40.50.1100:FF:000018">
    <property type="entry name" value="D-serine dehydratase"/>
    <property type="match status" value="1"/>
</dbReference>
<dbReference type="Gene3D" id="3.40.50.1100">
    <property type="match status" value="2"/>
</dbReference>
<dbReference type="HAMAP" id="MF_01030">
    <property type="entry name" value="D_Ser_dehydrat"/>
    <property type="match status" value="1"/>
</dbReference>
<dbReference type="InterPro" id="IPR011780">
    <property type="entry name" value="D_Ser_am_lyase"/>
</dbReference>
<dbReference type="InterPro" id="IPR050147">
    <property type="entry name" value="Ser/Thr_Dehydratase"/>
</dbReference>
<dbReference type="InterPro" id="IPR000634">
    <property type="entry name" value="Ser/Thr_deHydtase_PyrdxlP-BS"/>
</dbReference>
<dbReference type="InterPro" id="IPR001926">
    <property type="entry name" value="TrpB-like_PALP"/>
</dbReference>
<dbReference type="InterPro" id="IPR036052">
    <property type="entry name" value="TrpB-like_PALP_sf"/>
</dbReference>
<dbReference type="NCBIfam" id="TIGR02035">
    <property type="entry name" value="D_Ser_am_lyase"/>
    <property type="match status" value="1"/>
</dbReference>
<dbReference type="NCBIfam" id="NF002823">
    <property type="entry name" value="PRK02991.1"/>
    <property type="match status" value="1"/>
</dbReference>
<dbReference type="PANTHER" id="PTHR48078:SF9">
    <property type="entry name" value="D-SERINE DEHYDRATASE"/>
    <property type="match status" value="1"/>
</dbReference>
<dbReference type="PANTHER" id="PTHR48078">
    <property type="entry name" value="THREONINE DEHYDRATASE, MITOCHONDRIAL-RELATED"/>
    <property type="match status" value="1"/>
</dbReference>
<dbReference type="Pfam" id="PF00291">
    <property type="entry name" value="PALP"/>
    <property type="match status" value="1"/>
</dbReference>
<dbReference type="SUPFAM" id="SSF53686">
    <property type="entry name" value="Tryptophan synthase beta subunit-like PLP-dependent enzymes"/>
    <property type="match status" value="1"/>
</dbReference>
<dbReference type="PROSITE" id="PS00165">
    <property type="entry name" value="DEHYDRATASE_SER_THR"/>
    <property type="match status" value="1"/>
</dbReference>
<feature type="chain" id="PRO_1000084240" description="Probable D-serine dehydratase">
    <location>
        <begin position="1"/>
        <end position="438"/>
    </location>
</feature>
<feature type="modified residue" description="N6-(pyridoxal phosphate)lysine" evidence="1">
    <location>
        <position position="114"/>
    </location>
</feature>
<proteinExistence type="inferred from homology"/>